<evidence type="ECO:0000255" key="1">
    <source>
        <dbReference type="HAMAP-Rule" id="MF_01325"/>
    </source>
</evidence>
<evidence type="ECO:0000305" key="2"/>
<reference key="1">
    <citation type="journal article" date="2009" name="Environ. Microbiol.">
        <title>Genome sequence of Desulfobacterium autotrophicum HRM2, a marine sulfate reducer oxidizing organic carbon completely to carbon dioxide.</title>
        <authorList>
            <person name="Strittmatter A.W."/>
            <person name="Liesegang H."/>
            <person name="Rabus R."/>
            <person name="Decker I."/>
            <person name="Amann J."/>
            <person name="Andres S."/>
            <person name="Henne A."/>
            <person name="Fricke W.F."/>
            <person name="Martinez-Arias R."/>
            <person name="Bartels D."/>
            <person name="Goesmann A."/>
            <person name="Krause L."/>
            <person name="Puehler A."/>
            <person name="Klenk H.P."/>
            <person name="Richter M."/>
            <person name="Schuler M."/>
            <person name="Gloeckner F.O."/>
            <person name="Meyerdierks A."/>
            <person name="Gottschalk G."/>
            <person name="Amann R."/>
        </authorList>
    </citation>
    <scope>NUCLEOTIDE SEQUENCE [LARGE SCALE GENOMIC DNA]</scope>
    <source>
        <strain>ATCC 43914 / DSM 3382 / VKM B-1955 / HRM2</strain>
    </source>
</reference>
<comment type="function">
    <text evidence="1">One of the primary rRNA binding proteins, it binds directly near the 3'-end of the 23S rRNA, where it nucleates assembly of the 50S subunit.</text>
</comment>
<comment type="subunit">
    <text evidence="1">Part of the 50S ribosomal subunit. Forms a cluster with proteins L14 and L19.</text>
</comment>
<comment type="similarity">
    <text evidence="1">Belongs to the universal ribosomal protein uL3 family.</text>
</comment>
<accession>C0Q9X3</accession>
<keyword id="KW-1185">Reference proteome</keyword>
<keyword id="KW-0687">Ribonucleoprotein</keyword>
<keyword id="KW-0689">Ribosomal protein</keyword>
<keyword id="KW-0694">RNA-binding</keyword>
<keyword id="KW-0699">rRNA-binding</keyword>
<name>RL3_DESAH</name>
<protein>
    <recommendedName>
        <fullName evidence="1">Large ribosomal subunit protein uL3</fullName>
    </recommendedName>
    <alternativeName>
        <fullName evidence="2">50S ribosomal protein L3</fullName>
    </alternativeName>
</protein>
<gene>
    <name evidence="1" type="primary">rplC</name>
    <name type="ordered locus">HRM2_36260</name>
</gene>
<organism>
    <name type="scientific">Desulforapulum autotrophicum (strain ATCC 43914 / DSM 3382 / VKM B-1955 / HRM2)</name>
    <name type="common">Desulfobacterium autotrophicum</name>
    <dbReference type="NCBI Taxonomy" id="177437"/>
    <lineage>
        <taxon>Bacteria</taxon>
        <taxon>Pseudomonadati</taxon>
        <taxon>Thermodesulfobacteriota</taxon>
        <taxon>Desulfobacteria</taxon>
        <taxon>Desulfobacterales</taxon>
        <taxon>Desulfobacteraceae</taxon>
        <taxon>Desulforapulum</taxon>
    </lineage>
</organism>
<sequence length="207" mass="22437">MFKGMLGKKIGMTSIFAADGTLVPVTVVRFGPCVVTQVKAEKTDGYNALQLGFDERALAKCNKPKVGHFSKSGSTGFNVVREFRVENTDEFEVGQNIGLDGFAIGDKVNVSGTSKGRGFAGTIKRHGFSRGPETHGCRNHRKPGSIGCSAWPARVVKGRRMPGHMGVDRKTVKNLEIIDIRPDENLVMIKGPVPGWKTGLLEIRKAV</sequence>
<feature type="chain" id="PRO_1000214504" description="Large ribosomal subunit protein uL3">
    <location>
        <begin position="1"/>
        <end position="207"/>
    </location>
</feature>
<proteinExistence type="inferred from homology"/>
<dbReference type="EMBL" id="CP001087">
    <property type="protein sequence ID" value="ACN16691.1"/>
    <property type="molecule type" value="Genomic_DNA"/>
</dbReference>
<dbReference type="RefSeq" id="WP_015905441.1">
    <property type="nucleotide sequence ID" value="NC_012108.1"/>
</dbReference>
<dbReference type="SMR" id="C0Q9X3"/>
<dbReference type="STRING" id="177437.HRM2_36260"/>
<dbReference type="KEGG" id="dat:HRM2_36260"/>
<dbReference type="eggNOG" id="COG0087">
    <property type="taxonomic scope" value="Bacteria"/>
</dbReference>
<dbReference type="HOGENOM" id="CLU_044142_4_1_7"/>
<dbReference type="OrthoDB" id="9806135at2"/>
<dbReference type="Proteomes" id="UP000000442">
    <property type="component" value="Chromosome"/>
</dbReference>
<dbReference type="GO" id="GO:0022625">
    <property type="term" value="C:cytosolic large ribosomal subunit"/>
    <property type="evidence" value="ECO:0007669"/>
    <property type="project" value="TreeGrafter"/>
</dbReference>
<dbReference type="GO" id="GO:0019843">
    <property type="term" value="F:rRNA binding"/>
    <property type="evidence" value="ECO:0007669"/>
    <property type="project" value="UniProtKB-UniRule"/>
</dbReference>
<dbReference type="GO" id="GO:0003735">
    <property type="term" value="F:structural constituent of ribosome"/>
    <property type="evidence" value="ECO:0007669"/>
    <property type="project" value="InterPro"/>
</dbReference>
<dbReference type="GO" id="GO:0006412">
    <property type="term" value="P:translation"/>
    <property type="evidence" value="ECO:0007669"/>
    <property type="project" value="UniProtKB-UniRule"/>
</dbReference>
<dbReference type="FunFam" id="2.40.30.10:FF:000004">
    <property type="entry name" value="50S ribosomal protein L3"/>
    <property type="match status" value="1"/>
</dbReference>
<dbReference type="FunFam" id="3.30.160.810:FF:000001">
    <property type="entry name" value="50S ribosomal protein L3"/>
    <property type="match status" value="1"/>
</dbReference>
<dbReference type="Gene3D" id="3.30.160.810">
    <property type="match status" value="1"/>
</dbReference>
<dbReference type="Gene3D" id="2.40.30.10">
    <property type="entry name" value="Translation factors"/>
    <property type="match status" value="1"/>
</dbReference>
<dbReference type="HAMAP" id="MF_01325_B">
    <property type="entry name" value="Ribosomal_uL3_B"/>
    <property type="match status" value="1"/>
</dbReference>
<dbReference type="InterPro" id="IPR000597">
    <property type="entry name" value="Ribosomal_uL3"/>
</dbReference>
<dbReference type="InterPro" id="IPR019927">
    <property type="entry name" value="Ribosomal_uL3_bac/org-type"/>
</dbReference>
<dbReference type="InterPro" id="IPR019926">
    <property type="entry name" value="Ribosomal_uL3_CS"/>
</dbReference>
<dbReference type="InterPro" id="IPR009000">
    <property type="entry name" value="Transl_B-barrel_sf"/>
</dbReference>
<dbReference type="NCBIfam" id="TIGR03625">
    <property type="entry name" value="L3_bact"/>
    <property type="match status" value="1"/>
</dbReference>
<dbReference type="PANTHER" id="PTHR11229">
    <property type="entry name" value="50S RIBOSOMAL PROTEIN L3"/>
    <property type="match status" value="1"/>
</dbReference>
<dbReference type="PANTHER" id="PTHR11229:SF16">
    <property type="entry name" value="LARGE RIBOSOMAL SUBUNIT PROTEIN UL3C"/>
    <property type="match status" value="1"/>
</dbReference>
<dbReference type="Pfam" id="PF00297">
    <property type="entry name" value="Ribosomal_L3"/>
    <property type="match status" value="1"/>
</dbReference>
<dbReference type="SUPFAM" id="SSF50447">
    <property type="entry name" value="Translation proteins"/>
    <property type="match status" value="1"/>
</dbReference>
<dbReference type="PROSITE" id="PS00474">
    <property type="entry name" value="RIBOSOMAL_L3"/>
    <property type="match status" value="1"/>
</dbReference>